<accession>Q01Q15</accession>
<feature type="chain" id="PRO_1000094625" description="3-dehydroquinate synthase">
    <location>
        <begin position="1"/>
        <end position="357"/>
    </location>
</feature>
<feature type="binding site" evidence="1">
    <location>
        <begin position="126"/>
        <end position="127"/>
    </location>
    <ligand>
        <name>NAD(+)</name>
        <dbReference type="ChEBI" id="CHEBI:57540"/>
    </ligand>
</feature>
<feature type="binding site" evidence="1">
    <location>
        <position position="139"/>
    </location>
    <ligand>
        <name>NAD(+)</name>
        <dbReference type="ChEBI" id="CHEBI:57540"/>
    </ligand>
</feature>
<feature type="binding site" evidence="1">
    <location>
        <position position="148"/>
    </location>
    <ligand>
        <name>NAD(+)</name>
        <dbReference type="ChEBI" id="CHEBI:57540"/>
    </ligand>
</feature>
<feature type="binding site" evidence="1">
    <location>
        <position position="181"/>
    </location>
    <ligand>
        <name>Zn(2+)</name>
        <dbReference type="ChEBI" id="CHEBI:29105"/>
    </ligand>
</feature>
<feature type="binding site" evidence="1">
    <location>
        <position position="244"/>
    </location>
    <ligand>
        <name>Zn(2+)</name>
        <dbReference type="ChEBI" id="CHEBI:29105"/>
    </ligand>
</feature>
<feature type="binding site" evidence="1">
    <location>
        <position position="261"/>
    </location>
    <ligand>
        <name>Zn(2+)</name>
        <dbReference type="ChEBI" id="CHEBI:29105"/>
    </ligand>
</feature>
<proteinExistence type="inferred from homology"/>
<keyword id="KW-0028">Amino-acid biosynthesis</keyword>
<keyword id="KW-0057">Aromatic amino acid biosynthesis</keyword>
<keyword id="KW-0170">Cobalt</keyword>
<keyword id="KW-0963">Cytoplasm</keyword>
<keyword id="KW-0456">Lyase</keyword>
<keyword id="KW-0479">Metal-binding</keyword>
<keyword id="KW-0520">NAD</keyword>
<keyword id="KW-0547">Nucleotide-binding</keyword>
<keyword id="KW-0862">Zinc</keyword>
<gene>
    <name evidence="1" type="primary">aroB</name>
    <name type="ordered locus">Acid_7344</name>
</gene>
<dbReference type="EC" id="4.2.3.4" evidence="1"/>
<dbReference type="EMBL" id="CP000473">
    <property type="protein sequence ID" value="ABJ88255.1"/>
    <property type="molecule type" value="Genomic_DNA"/>
</dbReference>
<dbReference type="SMR" id="Q01Q15"/>
<dbReference type="FunCoup" id="Q01Q15">
    <property type="interactions" value="571"/>
</dbReference>
<dbReference type="STRING" id="234267.Acid_7344"/>
<dbReference type="KEGG" id="sus:Acid_7344"/>
<dbReference type="eggNOG" id="COG0337">
    <property type="taxonomic scope" value="Bacteria"/>
</dbReference>
<dbReference type="HOGENOM" id="CLU_001201_0_1_0"/>
<dbReference type="InParanoid" id="Q01Q15"/>
<dbReference type="OrthoDB" id="9806583at2"/>
<dbReference type="UniPathway" id="UPA00053">
    <property type="reaction ID" value="UER00085"/>
</dbReference>
<dbReference type="GO" id="GO:0005737">
    <property type="term" value="C:cytoplasm"/>
    <property type="evidence" value="ECO:0007669"/>
    <property type="project" value="UniProtKB-SubCell"/>
</dbReference>
<dbReference type="GO" id="GO:0003856">
    <property type="term" value="F:3-dehydroquinate synthase activity"/>
    <property type="evidence" value="ECO:0007669"/>
    <property type="project" value="UniProtKB-UniRule"/>
</dbReference>
<dbReference type="GO" id="GO:0046872">
    <property type="term" value="F:metal ion binding"/>
    <property type="evidence" value="ECO:0007669"/>
    <property type="project" value="UniProtKB-KW"/>
</dbReference>
<dbReference type="GO" id="GO:0000166">
    <property type="term" value="F:nucleotide binding"/>
    <property type="evidence" value="ECO:0007669"/>
    <property type="project" value="UniProtKB-KW"/>
</dbReference>
<dbReference type="GO" id="GO:0008652">
    <property type="term" value="P:amino acid biosynthetic process"/>
    <property type="evidence" value="ECO:0007669"/>
    <property type="project" value="UniProtKB-KW"/>
</dbReference>
<dbReference type="GO" id="GO:0009073">
    <property type="term" value="P:aromatic amino acid family biosynthetic process"/>
    <property type="evidence" value="ECO:0007669"/>
    <property type="project" value="UniProtKB-KW"/>
</dbReference>
<dbReference type="GO" id="GO:0009423">
    <property type="term" value="P:chorismate biosynthetic process"/>
    <property type="evidence" value="ECO:0007669"/>
    <property type="project" value="UniProtKB-UniRule"/>
</dbReference>
<dbReference type="CDD" id="cd08195">
    <property type="entry name" value="DHQS"/>
    <property type="match status" value="1"/>
</dbReference>
<dbReference type="FunFam" id="3.40.50.1970:FF:000007">
    <property type="entry name" value="Pentafunctional AROM polypeptide"/>
    <property type="match status" value="1"/>
</dbReference>
<dbReference type="Gene3D" id="3.40.50.1970">
    <property type="match status" value="1"/>
</dbReference>
<dbReference type="Gene3D" id="1.20.1090.10">
    <property type="entry name" value="Dehydroquinate synthase-like - alpha domain"/>
    <property type="match status" value="1"/>
</dbReference>
<dbReference type="HAMAP" id="MF_00110">
    <property type="entry name" value="DHQ_synthase"/>
    <property type="match status" value="1"/>
</dbReference>
<dbReference type="InterPro" id="IPR050071">
    <property type="entry name" value="Dehydroquinate_synthase"/>
</dbReference>
<dbReference type="InterPro" id="IPR016037">
    <property type="entry name" value="DHQ_synth_AroB"/>
</dbReference>
<dbReference type="InterPro" id="IPR030963">
    <property type="entry name" value="DHQ_synth_fam"/>
</dbReference>
<dbReference type="InterPro" id="IPR030960">
    <property type="entry name" value="DHQS/DOIS_N"/>
</dbReference>
<dbReference type="InterPro" id="IPR056179">
    <property type="entry name" value="DHQS_C"/>
</dbReference>
<dbReference type="NCBIfam" id="TIGR01357">
    <property type="entry name" value="aroB"/>
    <property type="match status" value="1"/>
</dbReference>
<dbReference type="PANTHER" id="PTHR43622">
    <property type="entry name" value="3-DEHYDROQUINATE SYNTHASE"/>
    <property type="match status" value="1"/>
</dbReference>
<dbReference type="PANTHER" id="PTHR43622:SF1">
    <property type="entry name" value="3-DEHYDROQUINATE SYNTHASE"/>
    <property type="match status" value="1"/>
</dbReference>
<dbReference type="Pfam" id="PF01761">
    <property type="entry name" value="DHQ_synthase"/>
    <property type="match status" value="1"/>
</dbReference>
<dbReference type="Pfam" id="PF24621">
    <property type="entry name" value="DHQS_C"/>
    <property type="match status" value="1"/>
</dbReference>
<dbReference type="PIRSF" id="PIRSF001455">
    <property type="entry name" value="DHQ_synth"/>
    <property type="match status" value="1"/>
</dbReference>
<dbReference type="SUPFAM" id="SSF56796">
    <property type="entry name" value="Dehydroquinate synthase-like"/>
    <property type="match status" value="1"/>
</dbReference>
<organism>
    <name type="scientific">Solibacter usitatus (strain Ellin6076)</name>
    <dbReference type="NCBI Taxonomy" id="234267"/>
    <lineage>
        <taxon>Bacteria</taxon>
        <taxon>Pseudomonadati</taxon>
        <taxon>Acidobacteriota</taxon>
        <taxon>Terriglobia</taxon>
        <taxon>Bryobacterales</taxon>
        <taxon>Solibacteraceae</taxon>
        <taxon>Candidatus Solibacter</taxon>
    </lineage>
</organism>
<comment type="function">
    <text evidence="1">Catalyzes the conversion of 3-deoxy-D-arabino-heptulosonate 7-phosphate (DAHP) to dehydroquinate (DHQ).</text>
</comment>
<comment type="catalytic activity">
    <reaction evidence="1">
        <text>7-phospho-2-dehydro-3-deoxy-D-arabino-heptonate = 3-dehydroquinate + phosphate</text>
        <dbReference type="Rhea" id="RHEA:21968"/>
        <dbReference type="ChEBI" id="CHEBI:32364"/>
        <dbReference type="ChEBI" id="CHEBI:43474"/>
        <dbReference type="ChEBI" id="CHEBI:58394"/>
        <dbReference type="EC" id="4.2.3.4"/>
    </reaction>
</comment>
<comment type="cofactor">
    <cofactor evidence="1">
        <name>Co(2+)</name>
        <dbReference type="ChEBI" id="CHEBI:48828"/>
    </cofactor>
    <cofactor evidence="1">
        <name>Zn(2+)</name>
        <dbReference type="ChEBI" id="CHEBI:29105"/>
    </cofactor>
    <text evidence="1">Binds 1 divalent metal cation per subunit. Can use either Co(2+) or Zn(2+).</text>
</comment>
<comment type="cofactor">
    <cofactor evidence="1">
        <name>NAD(+)</name>
        <dbReference type="ChEBI" id="CHEBI:57540"/>
    </cofactor>
</comment>
<comment type="pathway">
    <text evidence="1">Metabolic intermediate biosynthesis; chorismate biosynthesis; chorismate from D-erythrose 4-phosphate and phosphoenolpyruvate: step 2/7.</text>
</comment>
<comment type="subcellular location">
    <subcellularLocation>
        <location evidence="1">Cytoplasm</location>
    </subcellularLocation>
</comment>
<comment type="similarity">
    <text evidence="1">Belongs to the sugar phosphate cyclases superfamily. Dehydroquinate synthase family.</text>
</comment>
<sequence length="357" mass="38697">MPSYLVETPQRCYSAIVERGIIGQTAQYLPPKTGKVFVVTTADVWKHAGAPLKAALAGIPFEILNLPGGEDQKRLAPVEALAEEMVQRGADRSSMVIAYGGGIVTDMGGFLAAIFMRGIPVLQIPTTLLAQVDAAIGGKTGVNLVSGKNLIGSFHQPLAVLTDPAILDSLPEREYRAGLWEIIKAGIIREVELFDYLSESRADVLARKPEAVDHIIAESVRMKAEVVSSDEREGDMRRILNFGHTFGHALEAETEYKRLLHGEAVAWGMRAAIYLGESTGYVSAEDSVDMLQMIEDYGPIPSLAGIRAENLLARLVHDKKTVQGKVHFVLPVRIGEVTVVSGIEEPLVFEAMRSALA</sequence>
<name>AROB_SOLUE</name>
<reference key="1">
    <citation type="journal article" date="2009" name="Appl. Environ. Microbiol.">
        <title>Three genomes from the phylum Acidobacteria provide insight into the lifestyles of these microorganisms in soils.</title>
        <authorList>
            <person name="Ward N.L."/>
            <person name="Challacombe J.F."/>
            <person name="Janssen P.H."/>
            <person name="Henrissat B."/>
            <person name="Coutinho P.M."/>
            <person name="Wu M."/>
            <person name="Xie G."/>
            <person name="Haft D.H."/>
            <person name="Sait M."/>
            <person name="Badger J."/>
            <person name="Barabote R.D."/>
            <person name="Bradley B."/>
            <person name="Brettin T.S."/>
            <person name="Brinkac L.M."/>
            <person name="Bruce D."/>
            <person name="Creasy T."/>
            <person name="Daugherty S.C."/>
            <person name="Davidsen T.M."/>
            <person name="DeBoy R.T."/>
            <person name="Detter J.C."/>
            <person name="Dodson R.J."/>
            <person name="Durkin A.S."/>
            <person name="Ganapathy A."/>
            <person name="Gwinn-Giglio M."/>
            <person name="Han C.S."/>
            <person name="Khouri H."/>
            <person name="Kiss H."/>
            <person name="Kothari S.P."/>
            <person name="Madupu R."/>
            <person name="Nelson K.E."/>
            <person name="Nelson W.C."/>
            <person name="Paulsen I."/>
            <person name="Penn K."/>
            <person name="Ren Q."/>
            <person name="Rosovitz M.J."/>
            <person name="Selengut J.D."/>
            <person name="Shrivastava S."/>
            <person name="Sullivan S.A."/>
            <person name="Tapia R."/>
            <person name="Thompson L.S."/>
            <person name="Watkins K.L."/>
            <person name="Yang Q."/>
            <person name="Yu C."/>
            <person name="Zafar N."/>
            <person name="Zhou L."/>
            <person name="Kuske C.R."/>
        </authorList>
    </citation>
    <scope>NUCLEOTIDE SEQUENCE [LARGE SCALE GENOMIC DNA]</scope>
    <source>
        <strain>Ellin6076</strain>
    </source>
</reference>
<evidence type="ECO:0000255" key="1">
    <source>
        <dbReference type="HAMAP-Rule" id="MF_00110"/>
    </source>
</evidence>
<protein>
    <recommendedName>
        <fullName evidence="1">3-dehydroquinate synthase</fullName>
        <shortName evidence="1">DHQS</shortName>
        <ecNumber evidence="1">4.2.3.4</ecNumber>
    </recommendedName>
</protein>